<gene>
    <name evidence="1" type="primary">recF</name>
    <name type="ordered locus">ECED1_4391</name>
</gene>
<dbReference type="EMBL" id="CU928162">
    <property type="protein sequence ID" value="CAR10375.1"/>
    <property type="molecule type" value="Genomic_DNA"/>
</dbReference>
<dbReference type="RefSeq" id="WP_000060112.1">
    <property type="nucleotide sequence ID" value="NC_011745.1"/>
</dbReference>
<dbReference type="SMR" id="B7N204"/>
<dbReference type="GeneID" id="93778441"/>
<dbReference type="KEGG" id="ecq:ECED1_4391"/>
<dbReference type="HOGENOM" id="CLU_040267_0_0_6"/>
<dbReference type="Proteomes" id="UP000000748">
    <property type="component" value="Chromosome"/>
</dbReference>
<dbReference type="GO" id="GO:0005737">
    <property type="term" value="C:cytoplasm"/>
    <property type="evidence" value="ECO:0007669"/>
    <property type="project" value="UniProtKB-SubCell"/>
</dbReference>
<dbReference type="GO" id="GO:0005524">
    <property type="term" value="F:ATP binding"/>
    <property type="evidence" value="ECO:0007669"/>
    <property type="project" value="UniProtKB-UniRule"/>
</dbReference>
<dbReference type="GO" id="GO:0003697">
    <property type="term" value="F:single-stranded DNA binding"/>
    <property type="evidence" value="ECO:0007669"/>
    <property type="project" value="UniProtKB-UniRule"/>
</dbReference>
<dbReference type="GO" id="GO:0006260">
    <property type="term" value="P:DNA replication"/>
    <property type="evidence" value="ECO:0007669"/>
    <property type="project" value="UniProtKB-UniRule"/>
</dbReference>
<dbReference type="GO" id="GO:0000731">
    <property type="term" value="P:DNA synthesis involved in DNA repair"/>
    <property type="evidence" value="ECO:0007669"/>
    <property type="project" value="TreeGrafter"/>
</dbReference>
<dbReference type="GO" id="GO:0006302">
    <property type="term" value="P:double-strand break repair"/>
    <property type="evidence" value="ECO:0007669"/>
    <property type="project" value="TreeGrafter"/>
</dbReference>
<dbReference type="GO" id="GO:0009432">
    <property type="term" value="P:SOS response"/>
    <property type="evidence" value="ECO:0007669"/>
    <property type="project" value="UniProtKB-UniRule"/>
</dbReference>
<dbReference type="FunFam" id="1.20.1050.90:FF:000001">
    <property type="entry name" value="DNA replication and repair protein RecF"/>
    <property type="match status" value="1"/>
</dbReference>
<dbReference type="Gene3D" id="3.40.50.300">
    <property type="entry name" value="P-loop containing nucleotide triphosphate hydrolases"/>
    <property type="match status" value="1"/>
</dbReference>
<dbReference type="Gene3D" id="1.20.1050.90">
    <property type="entry name" value="RecF/RecN/SMC, N-terminal domain"/>
    <property type="match status" value="1"/>
</dbReference>
<dbReference type="HAMAP" id="MF_00365">
    <property type="entry name" value="RecF"/>
    <property type="match status" value="1"/>
</dbReference>
<dbReference type="InterPro" id="IPR001238">
    <property type="entry name" value="DNA-binding_RecF"/>
</dbReference>
<dbReference type="InterPro" id="IPR018078">
    <property type="entry name" value="DNA-binding_RecF_CS"/>
</dbReference>
<dbReference type="InterPro" id="IPR027417">
    <property type="entry name" value="P-loop_NTPase"/>
</dbReference>
<dbReference type="InterPro" id="IPR003395">
    <property type="entry name" value="RecF/RecN/SMC_N"/>
</dbReference>
<dbReference type="InterPro" id="IPR042174">
    <property type="entry name" value="RecF_2"/>
</dbReference>
<dbReference type="NCBIfam" id="TIGR00611">
    <property type="entry name" value="recf"/>
    <property type="match status" value="1"/>
</dbReference>
<dbReference type="PANTHER" id="PTHR32182">
    <property type="entry name" value="DNA REPLICATION AND REPAIR PROTEIN RECF"/>
    <property type="match status" value="1"/>
</dbReference>
<dbReference type="PANTHER" id="PTHR32182:SF0">
    <property type="entry name" value="DNA REPLICATION AND REPAIR PROTEIN RECF"/>
    <property type="match status" value="1"/>
</dbReference>
<dbReference type="Pfam" id="PF02463">
    <property type="entry name" value="SMC_N"/>
    <property type="match status" value="1"/>
</dbReference>
<dbReference type="SUPFAM" id="SSF52540">
    <property type="entry name" value="P-loop containing nucleoside triphosphate hydrolases"/>
    <property type="match status" value="1"/>
</dbReference>
<dbReference type="PROSITE" id="PS00617">
    <property type="entry name" value="RECF_1"/>
    <property type="match status" value="1"/>
</dbReference>
<dbReference type="PROSITE" id="PS00618">
    <property type="entry name" value="RECF_2"/>
    <property type="match status" value="1"/>
</dbReference>
<protein>
    <recommendedName>
        <fullName evidence="1">DNA replication and repair protein RecF</fullName>
    </recommendedName>
</protein>
<sequence length="357" mass="40514">MSLTRLLIRDFRNIETADLALSPGFNFLVGANGSGKTSVLEAIYTLGHGRAFRSLQIGRVIRHEQEAFVLHGRLQGEERETAIGLTKDKQGDSKVRIDGTDGHKVAELAHLMPMQLITPEGFTLLNGGPKYRRAFLDWGCFHNEPGFFTAWSNLKRLLKQRNAALRQVTRYEQLRPWDKELIPLAEQISTWRAEYSAGIAADMADTCKQFLPEFSLTFSFQRGWEKETEYAEVLERNFERDRQLTYTAHGPHKADLRIRADGAPVEDTLSRGQLKLLMCALRLAQGEFLTRESGRRCLYLIDDFASELDDERRGLLASRLKATQSQVFVSAISAEHVIDMSDENSKMFTVEKGKITD</sequence>
<organism>
    <name type="scientific">Escherichia coli O81 (strain ED1a)</name>
    <dbReference type="NCBI Taxonomy" id="585397"/>
    <lineage>
        <taxon>Bacteria</taxon>
        <taxon>Pseudomonadati</taxon>
        <taxon>Pseudomonadota</taxon>
        <taxon>Gammaproteobacteria</taxon>
        <taxon>Enterobacterales</taxon>
        <taxon>Enterobacteriaceae</taxon>
        <taxon>Escherichia</taxon>
    </lineage>
</organism>
<accession>B7N204</accession>
<comment type="function">
    <text evidence="1">The RecF protein is involved in DNA metabolism; it is required for DNA replication and normal SOS inducibility. RecF binds preferentially to single-stranded, linear DNA. It also seems to bind ATP.</text>
</comment>
<comment type="subcellular location">
    <subcellularLocation>
        <location evidence="1">Cytoplasm</location>
    </subcellularLocation>
</comment>
<comment type="similarity">
    <text evidence="1">Belongs to the RecF family.</text>
</comment>
<keyword id="KW-0067">ATP-binding</keyword>
<keyword id="KW-0963">Cytoplasm</keyword>
<keyword id="KW-0227">DNA damage</keyword>
<keyword id="KW-0234">DNA repair</keyword>
<keyword id="KW-0235">DNA replication</keyword>
<keyword id="KW-0238">DNA-binding</keyword>
<keyword id="KW-0547">Nucleotide-binding</keyword>
<keyword id="KW-0742">SOS response</keyword>
<feature type="chain" id="PRO_1000133688" description="DNA replication and repair protein RecF">
    <location>
        <begin position="1"/>
        <end position="357"/>
    </location>
</feature>
<feature type="binding site" evidence="1">
    <location>
        <begin position="30"/>
        <end position="37"/>
    </location>
    <ligand>
        <name>ATP</name>
        <dbReference type="ChEBI" id="CHEBI:30616"/>
    </ligand>
</feature>
<proteinExistence type="inferred from homology"/>
<name>RECF_ECO81</name>
<reference key="1">
    <citation type="journal article" date="2009" name="PLoS Genet.">
        <title>Organised genome dynamics in the Escherichia coli species results in highly diverse adaptive paths.</title>
        <authorList>
            <person name="Touchon M."/>
            <person name="Hoede C."/>
            <person name="Tenaillon O."/>
            <person name="Barbe V."/>
            <person name="Baeriswyl S."/>
            <person name="Bidet P."/>
            <person name="Bingen E."/>
            <person name="Bonacorsi S."/>
            <person name="Bouchier C."/>
            <person name="Bouvet O."/>
            <person name="Calteau A."/>
            <person name="Chiapello H."/>
            <person name="Clermont O."/>
            <person name="Cruveiller S."/>
            <person name="Danchin A."/>
            <person name="Diard M."/>
            <person name="Dossat C."/>
            <person name="Karoui M.E."/>
            <person name="Frapy E."/>
            <person name="Garry L."/>
            <person name="Ghigo J.M."/>
            <person name="Gilles A.M."/>
            <person name="Johnson J."/>
            <person name="Le Bouguenec C."/>
            <person name="Lescat M."/>
            <person name="Mangenot S."/>
            <person name="Martinez-Jehanne V."/>
            <person name="Matic I."/>
            <person name="Nassif X."/>
            <person name="Oztas S."/>
            <person name="Petit M.A."/>
            <person name="Pichon C."/>
            <person name="Rouy Z."/>
            <person name="Ruf C.S."/>
            <person name="Schneider D."/>
            <person name="Tourret J."/>
            <person name="Vacherie B."/>
            <person name="Vallenet D."/>
            <person name="Medigue C."/>
            <person name="Rocha E.P.C."/>
            <person name="Denamur E."/>
        </authorList>
    </citation>
    <scope>NUCLEOTIDE SEQUENCE [LARGE SCALE GENOMIC DNA]</scope>
    <source>
        <strain>ED1a</strain>
    </source>
</reference>
<evidence type="ECO:0000255" key="1">
    <source>
        <dbReference type="HAMAP-Rule" id="MF_00365"/>
    </source>
</evidence>